<accession>Q32RP3</accession>
<gene>
    <name evidence="1" type="primary">psbK</name>
</gene>
<name>PSBK_ZYGCR</name>
<evidence type="ECO:0000255" key="1">
    <source>
        <dbReference type="HAMAP-Rule" id="MF_00441"/>
    </source>
</evidence>
<evidence type="ECO:0000305" key="2"/>
<comment type="function">
    <text evidence="1">One of the components of the core complex of photosystem II (PSII). PSII is a light-driven water:plastoquinone oxidoreductase that uses light energy to abstract electrons from H(2)O, generating O(2) and a proton gradient subsequently used for ATP formation. It consists of a core antenna complex that captures photons, and an electron transfer chain that converts photonic excitation into a charge separation.</text>
</comment>
<comment type="subunit">
    <text evidence="1">PSII is composed of 1 copy each of membrane proteins PsbA, PsbB, PsbC, PsbD, PsbE, PsbF, PsbH, PsbI, PsbJ, PsbK, PsbL, PsbM, PsbT, PsbX, PsbY, PsbZ, Psb30/Ycf12, at least 3 peripheral proteins of the oxygen-evolving complex and a large number of cofactors. It forms dimeric complexes.</text>
</comment>
<comment type="subcellular location">
    <subcellularLocation>
        <location evidence="1">Plastid</location>
        <location evidence="1">Chloroplast thylakoid membrane</location>
        <topology evidence="1">Single-pass membrane protein</topology>
    </subcellularLocation>
</comment>
<comment type="similarity">
    <text evidence="1">Belongs to the PsbK family.</text>
</comment>
<comment type="sequence caution" evidence="2">
    <conflict type="erroneous initiation">
        <sequence resource="EMBL-CDS" id="AAX45845"/>
    </conflict>
    <text>Extended N-terminus.</text>
</comment>
<geneLocation type="chloroplast"/>
<protein>
    <recommendedName>
        <fullName evidence="1">Photosystem II reaction center protein K</fullName>
        <shortName evidence="1">PSII-K</shortName>
    </recommendedName>
</protein>
<reference key="1">
    <citation type="journal article" date="2005" name="BMC Biol.">
        <title>The complete chloroplast DNA sequences of the charophycean green algae Staurastrum and Zygnema reveal that the chloroplast genome underwent extensive changes during the evolution of the Zygnematales.</title>
        <authorList>
            <person name="Turmel M."/>
            <person name="Otis C."/>
            <person name="Lemieux C."/>
        </authorList>
    </citation>
    <scope>NUCLEOTIDE SEQUENCE [LARGE SCALE GENOMIC DNA]</scope>
</reference>
<keyword id="KW-0150">Chloroplast</keyword>
<keyword id="KW-0472">Membrane</keyword>
<keyword id="KW-0602">Photosynthesis</keyword>
<keyword id="KW-0604">Photosystem II</keyword>
<keyword id="KW-0934">Plastid</keyword>
<keyword id="KW-0674">Reaction center</keyword>
<keyword id="KW-0793">Thylakoid</keyword>
<keyword id="KW-0812">Transmembrane</keyword>
<keyword id="KW-1133">Transmembrane helix</keyword>
<organism>
    <name type="scientific">Zygnema circumcarinatum</name>
    <name type="common">Green alga</name>
    <dbReference type="NCBI Taxonomy" id="35869"/>
    <lineage>
        <taxon>Eukaryota</taxon>
        <taxon>Viridiplantae</taxon>
        <taxon>Streptophyta</taxon>
        <taxon>Zygnematophyceae</taxon>
        <taxon>Zygnematophycidae</taxon>
        <taxon>Zygnematales</taxon>
        <taxon>Zygnemataceae</taxon>
        <taxon>Zygnema</taxon>
    </lineage>
</organism>
<proteinExistence type="inferred from homology"/>
<dbReference type="EMBL" id="AY958086">
    <property type="protein sequence ID" value="AAX45845.1"/>
    <property type="status" value="ALT_INIT"/>
    <property type="molecule type" value="Genomic_DNA"/>
</dbReference>
<dbReference type="RefSeq" id="YP_636483.1">
    <property type="nucleotide sequence ID" value="NC_008117.1"/>
</dbReference>
<dbReference type="SMR" id="Q32RP3"/>
<dbReference type="GeneID" id="4108165"/>
<dbReference type="GO" id="GO:0009535">
    <property type="term" value="C:chloroplast thylakoid membrane"/>
    <property type="evidence" value="ECO:0007669"/>
    <property type="project" value="UniProtKB-SubCell"/>
</dbReference>
<dbReference type="GO" id="GO:0009539">
    <property type="term" value="C:photosystem II reaction center"/>
    <property type="evidence" value="ECO:0007669"/>
    <property type="project" value="InterPro"/>
</dbReference>
<dbReference type="GO" id="GO:0015979">
    <property type="term" value="P:photosynthesis"/>
    <property type="evidence" value="ECO:0007669"/>
    <property type="project" value="UniProtKB-UniRule"/>
</dbReference>
<dbReference type="HAMAP" id="MF_00441">
    <property type="entry name" value="PSII_PsbK"/>
    <property type="match status" value="1"/>
</dbReference>
<dbReference type="InterPro" id="IPR003687">
    <property type="entry name" value="PSII_PsbK"/>
</dbReference>
<dbReference type="InterPro" id="IPR037270">
    <property type="entry name" value="PSII_PsbK_sf"/>
</dbReference>
<dbReference type="NCBIfam" id="NF002715">
    <property type="entry name" value="PRK02553.1"/>
    <property type="match status" value="1"/>
</dbReference>
<dbReference type="PANTHER" id="PTHR35325">
    <property type="match status" value="1"/>
</dbReference>
<dbReference type="PANTHER" id="PTHR35325:SF1">
    <property type="entry name" value="PHOTOSYSTEM II REACTION CENTER PROTEIN K"/>
    <property type="match status" value="1"/>
</dbReference>
<dbReference type="Pfam" id="PF02533">
    <property type="entry name" value="PsbK"/>
    <property type="match status" value="1"/>
</dbReference>
<dbReference type="SUPFAM" id="SSF161037">
    <property type="entry name" value="Photosystem II reaction center protein K, PsbK"/>
    <property type="match status" value="1"/>
</dbReference>
<sequence length="58" mass="6532">MFDLYLKNLLDLSDSGTVVLAKLPEAYAIFDPIVDVLPVIPVFFLLLAFVWQASVSFR</sequence>
<feature type="propeptide" id="PRO_0000276190" evidence="1">
    <location>
        <begin position="1"/>
        <end position="21"/>
    </location>
</feature>
<feature type="chain" id="PRO_0000276191" description="Photosystem II reaction center protein K" evidence="1">
    <location>
        <begin position="22"/>
        <end position="58"/>
    </location>
</feature>
<feature type="transmembrane region" description="Helical" evidence="1">
    <location>
        <begin position="29"/>
        <end position="49"/>
    </location>
</feature>